<comment type="function">
    <text evidence="1">Channel that opens in response to stretch forces in the membrane lipid bilayer. May participate in the regulation of osmotic pressure changes within the cell.</text>
</comment>
<comment type="subunit">
    <text evidence="1">Homopentamer.</text>
</comment>
<comment type="subcellular location">
    <subcellularLocation>
        <location evidence="1">Cell membrane</location>
        <topology evidence="1">Multi-pass membrane protein</topology>
    </subcellularLocation>
</comment>
<comment type="similarity">
    <text evidence="1">Belongs to the MscL family.</text>
</comment>
<feature type="chain" id="PRO_0000192447" description="Large-conductance mechanosensitive channel">
    <location>
        <begin position="1"/>
        <end position="128"/>
    </location>
</feature>
<feature type="transmembrane region" description="Helical" evidence="1">
    <location>
        <begin position="11"/>
        <end position="31"/>
    </location>
</feature>
<feature type="transmembrane region" description="Helical" evidence="1">
    <location>
        <begin position="70"/>
        <end position="90"/>
    </location>
</feature>
<proteinExistence type="inferred from homology"/>
<keyword id="KW-1003">Cell membrane</keyword>
<keyword id="KW-0407">Ion channel</keyword>
<keyword id="KW-0406">Ion transport</keyword>
<keyword id="KW-0472">Membrane</keyword>
<keyword id="KW-0812">Transmembrane</keyword>
<keyword id="KW-1133">Transmembrane helix</keyword>
<keyword id="KW-0813">Transport</keyword>
<protein>
    <recommendedName>
        <fullName evidence="1">Large-conductance mechanosensitive channel</fullName>
    </recommendedName>
</protein>
<evidence type="ECO:0000255" key="1">
    <source>
        <dbReference type="HAMAP-Rule" id="MF_00115"/>
    </source>
</evidence>
<reference key="1">
    <citation type="journal article" date="2001" name="Science">
        <title>Comparative genomics of Listeria species.</title>
        <authorList>
            <person name="Glaser P."/>
            <person name="Frangeul L."/>
            <person name="Buchrieser C."/>
            <person name="Rusniok C."/>
            <person name="Amend A."/>
            <person name="Baquero F."/>
            <person name="Berche P."/>
            <person name="Bloecker H."/>
            <person name="Brandt P."/>
            <person name="Chakraborty T."/>
            <person name="Charbit A."/>
            <person name="Chetouani F."/>
            <person name="Couve E."/>
            <person name="de Daruvar A."/>
            <person name="Dehoux P."/>
            <person name="Domann E."/>
            <person name="Dominguez-Bernal G."/>
            <person name="Duchaud E."/>
            <person name="Durant L."/>
            <person name="Dussurget O."/>
            <person name="Entian K.-D."/>
            <person name="Fsihi H."/>
            <person name="Garcia-del Portillo F."/>
            <person name="Garrido P."/>
            <person name="Gautier L."/>
            <person name="Goebel W."/>
            <person name="Gomez-Lopez N."/>
            <person name="Hain T."/>
            <person name="Hauf J."/>
            <person name="Jackson D."/>
            <person name="Jones L.-M."/>
            <person name="Kaerst U."/>
            <person name="Kreft J."/>
            <person name="Kuhn M."/>
            <person name="Kunst F."/>
            <person name="Kurapkat G."/>
            <person name="Madueno E."/>
            <person name="Maitournam A."/>
            <person name="Mata Vicente J."/>
            <person name="Ng E."/>
            <person name="Nedjari H."/>
            <person name="Nordsiek G."/>
            <person name="Novella S."/>
            <person name="de Pablos B."/>
            <person name="Perez-Diaz J.-C."/>
            <person name="Purcell R."/>
            <person name="Remmel B."/>
            <person name="Rose M."/>
            <person name="Schlueter T."/>
            <person name="Simoes N."/>
            <person name="Tierrez A."/>
            <person name="Vazquez-Boland J.-A."/>
            <person name="Voss H."/>
            <person name="Wehland J."/>
            <person name="Cossart P."/>
        </authorList>
    </citation>
    <scope>NUCLEOTIDE SEQUENCE [LARGE SCALE GENOMIC DNA]</scope>
    <source>
        <strain>ATCC BAA-680 / CLIP 11262</strain>
    </source>
</reference>
<gene>
    <name evidence="1" type="primary">mscL</name>
    <name type="ordered locus">lin2170</name>
</gene>
<dbReference type="EMBL" id="AL596171">
    <property type="protein sequence ID" value="CAC97400.1"/>
    <property type="molecule type" value="Genomic_DNA"/>
</dbReference>
<dbReference type="PIR" id="AH1703">
    <property type="entry name" value="AH1703"/>
</dbReference>
<dbReference type="RefSeq" id="WP_010991046.1">
    <property type="nucleotide sequence ID" value="NC_003212.1"/>
</dbReference>
<dbReference type="SMR" id="Q929V3"/>
<dbReference type="STRING" id="272626.gene:17566528"/>
<dbReference type="GeneID" id="93235509"/>
<dbReference type="KEGG" id="lin:lin2170"/>
<dbReference type="eggNOG" id="COG1970">
    <property type="taxonomic scope" value="Bacteria"/>
</dbReference>
<dbReference type="HOGENOM" id="CLU_095787_0_0_9"/>
<dbReference type="OrthoDB" id="9810350at2"/>
<dbReference type="Proteomes" id="UP000002513">
    <property type="component" value="Chromosome"/>
</dbReference>
<dbReference type="GO" id="GO:0005886">
    <property type="term" value="C:plasma membrane"/>
    <property type="evidence" value="ECO:0007669"/>
    <property type="project" value="UniProtKB-SubCell"/>
</dbReference>
<dbReference type="GO" id="GO:0008381">
    <property type="term" value="F:mechanosensitive monoatomic ion channel activity"/>
    <property type="evidence" value="ECO:0007669"/>
    <property type="project" value="UniProtKB-UniRule"/>
</dbReference>
<dbReference type="FunFam" id="1.10.1200.120:FF:000003">
    <property type="entry name" value="Large-conductance mechanosensitive channel"/>
    <property type="match status" value="1"/>
</dbReference>
<dbReference type="Gene3D" id="1.10.1200.120">
    <property type="entry name" value="Large-conductance mechanosensitive channel, MscL, domain 1"/>
    <property type="match status" value="1"/>
</dbReference>
<dbReference type="HAMAP" id="MF_00115">
    <property type="entry name" value="MscL"/>
    <property type="match status" value="1"/>
</dbReference>
<dbReference type="InterPro" id="IPR019823">
    <property type="entry name" value="Mechanosensitive_channel_CS"/>
</dbReference>
<dbReference type="InterPro" id="IPR001185">
    <property type="entry name" value="MS_channel"/>
</dbReference>
<dbReference type="InterPro" id="IPR037673">
    <property type="entry name" value="MSC/AndL"/>
</dbReference>
<dbReference type="InterPro" id="IPR036019">
    <property type="entry name" value="MscL_channel"/>
</dbReference>
<dbReference type="NCBIfam" id="TIGR00220">
    <property type="entry name" value="mscL"/>
    <property type="match status" value="1"/>
</dbReference>
<dbReference type="NCBIfam" id="NF001843">
    <property type="entry name" value="PRK00567.1-4"/>
    <property type="match status" value="1"/>
</dbReference>
<dbReference type="NCBIfam" id="NF010558">
    <property type="entry name" value="PRK13953.1"/>
    <property type="match status" value="1"/>
</dbReference>
<dbReference type="PANTHER" id="PTHR30266:SF2">
    <property type="entry name" value="LARGE-CONDUCTANCE MECHANOSENSITIVE CHANNEL"/>
    <property type="match status" value="1"/>
</dbReference>
<dbReference type="PANTHER" id="PTHR30266">
    <property type="entry name" value="MECHANOSENSITIVE CHANNEL MSCL"/>
    <property type="match status" value="1"/>
</dbReference>
<dbReference type="Pfam" id="PF01741">
    <property type="entry name" value="MscL"/>
    <property type="match status" value="1"/>
</dbReference>
<dbReference type="PRINTS" id="PR01264">
    <property type="entry name" value="MECHCHANNEL"/>
</dbReference>
<dbReference type="SUPFAM" id="SSF81330">
    <property type="entry name" value="Gated mechanosensitive channel"/>
    <property type="match status" value="1"/>
</dbReference>
<dbReference type="PROSITE" id="PS01327">
    <property type="entry name" value="MSCL"/>
    <property type="match status" value="1"/>
</dbReference>
<sequence>MKKMLVEFRDFALKGNVLDLAVAVVIGAAFGKIVSSLVNNIIMPFVGVLLGGLDFSDLSFKVGKSVIQYGAFIQSIVDFVIIAFAIFIFVKVLTSFIKKKEQPTEETPVPPTEEYLKEIRDLLKEQQK</sequence>
<organism>
    <name type="scientific">Listeria innocua serovar 6a (strain ATCC BAA-680 / CLIP 11262)</name>
    <dbReference type="NCBI Taxonomy" id="272626"/>
    <lineage>
        <taxon>Bacteria</taxon>
        <taxon>Bacillati</taxon>
        <taxon>Bacillota</taxon>
        <taxon>Bacilli</taxon>
        <taxon>Bacillales</taxon>
        <taxon>Listeriaceae</taxon>
        <taxon>Listeria</taxon>
    </lineage>
</organism>
<name>MSCL_LISIN</name>
<accession>Q929V3</accession>